<protein>
    <recommendedName>
        <fullName evidence="7">U10-ctenitoxin-Co1b</fullName>
        <shortName evidence="7">U10-CNTX-Co1b</shortName>
    </recommendedName>
    <alternativeName>
        <fullName evidence="6">Neurotoxin Oc M31-11</fullName>
    </alternativeName>
</protein>
<evidence type="ECO:0000250" key="1"/>
<evidence type="ECO:0000250" key="2">
    <source>
        <dbReference type="UniProtKB" id="O76201"/>
    </source>
</evidence>
<evidence type="ECO:0000250" key="3">
    <source>
        <dbReference type="UniProtKB" id="P30288"/>
    </source>
</evidence>
<evidence type="ECO:0000255" key="4"/>
<evidence type="ECO:0000269" key="5">
    <source ref="1"/>
</evidence>
<evidence type="ECO:0000303" key="6">
    <source ref="1"/>
</evidence>
<evidence type="ECO:0000305" key="7"/>
<evidence type="ECO:0000305" key="8">
    <source ref="1"/>
</evidence>
<reference evidence="7" key="1">
    <citation type="submission" date="2007-07" db="UniProtKB">
        <authorList>
            <person name="Borges M.H."/>
            <person name="Oliveira C.F.B."/>
            <person name="Goncalves J.M."/>
            <person name="Rates B."/>
            <person name="Santos D.M."/>
            <person name="Pimenta A.M.C."/>
            <person name="Cordeiro M.N."/>
            <person name="Richardson M."/>
        </authorList>
    </citation>
    <scope>PROTEIN SEQUENCE</scope>
    <scope>SUBCELLULAR LOCATION</scope>
    <scope>MASS SPECTROMETRY</scope>
    <source>
        <tissue>Venom</tissue>
    </source>
</reference>
<organism>
    <name type="scientific">Ctenus ornatus</name>
    <name type="common">Brazilian spider</name>
    <name type="synonym">Oligoctenus ornatus</name>
    <dbReference type="NCBI Taxonomy" id="406443"/>
    <lineage>
        <taxon>Eukaryota</taxon>
        <taxon>Metazoa</taxon>
        <taxon>Ecdysozoa</taxon>
        <taxon>Arthropoda</taxon>
        <taxon>Chelicerata</taxon>
        <taxon>Arachnida</taxon>
        <taxon>Araneae</taxon>
        <taxon>Araneomorphae</taxon>
        <taxon>Entelegynae</taxon>
        <taxon>Lycosoidea</taxon>
        <taxon>Ctenidae</taxon>
        <taxon>Oligoctenus</taxon>
    </lineage>
</organism>
<name>TX20A_CTEON</name>
<proteinExistence type="evidence at protein level"/>
<accession>P85268</accession>
<dbReference type="SMR" id="P85268"/>
<dbReference type="ArachnoServer" id="AS000372">
    <property type="toxin name" value="U10-ctenitoxin-Co1b"/>
</dbReference>
<dbReference type="GO" id="GO:0005576">
    <property type="term" value="C:extracellular region"/>
    <property type="evidence" value="ECO:0007669"/>
    <property type="project" value="UniProtKB-SubCell"/>
</dbReference>
<dbReference type="GO" id="GO:0005246">
    <property type="term" value="F:calcium channel regulator activity"/>
    <property type="evidence" value="ECO:0007669"/>
    <property type="project" value="UniProtKB-KW"/>
</dbReference>
<dbReference type="GO" id="GO:0008200">
    <property type="term" value="F:ion channel inhibitor activity"/>
    <property type="evidence" value="ECO:0007669"/>
    <property type="project" value="InterPro"/>
</dbReference>
<dbReference type="GO" id="GO:0090729">
    <property type="term" value="F:toxin activity"/>
    <property type="evidence" value="ECO:0007669"/>
    <property type="project" value="UniProtKB-KW"/>
</dbReference>
<dbReference type="Gene3D" id="4.10.40.10">
    <property type="match status" value="1"/>
</dbReference>
<dbReference type="InterPro" id="IPR004169">
    <property type="entry name" value="Spidertoxin"/>
</dbReference>
<dbReference type="Pfam" id="PF02819">
    <property type="entry name" value="Toxin_9"/>
    <property type="match status" value="1"/>
</dbReference>
<dbReference type="SUPFAM" id="SSF57059">
    <property type="entry name" value="omega toxin-like"/>
    <property type="match status" value="1"/>
</dbReference>
<feature type="chain" id="PRO_0000302121" description="U10-ctenitoxin-Co1b" evidence="5">
    <location>
        <begin position="1"/>
        <end position="30" status="greater than"/>
    </location>
</feature>
<feature type="disulfide bond" evidence="2">
    <location>
        <begin position="2"/>
        <end position="17"/>
    </location>
</feature>
<feature type="disulfide bond" evidence="2">
    <location>
        <begin position="9"/>
        <end position="22"/>
    </location>
</feature>
<feature type="disulfide bond" evidence="2">
    <location>
        <begin position="16"/>
        <end status="unknown"/>
    </location>
</feature>
<feature type="disulfide bond" evidence="2">
    <location>
        <begin position="24"/>
        <end status="unknown"/>
    </location>
</feature>
<feature type="non-terminal residue">
    <location>
        <position position="30"/>
    </location>
</feature>
<sequence>ACVPVYKECWYPQKPCCEDRVCQCSFGMTN</sequence>
<comment type="function">
    <text evidence="1">Antagonist of L-type calcium channels (Cav1/CACNA1).</text>
</comment>
<comment type="subcellular location">
    <subcellularLocation>
        <location evidence="5">Secreted</location>
    </subcellularLocation>
</comment>
<comment type="tissue specificity">
    <text evidence="8">Expressed by the venom gland.</text>
</comment>
<comment type="domain">
    <text evidence="3">The presence of a 'disulfide through disulfide knot' structurally defines this protein as a knottin.</text>
</comment>
<comment type="mass spectrometry"/>
<comment type="similarity">
    <text evidence="4">Belongs to the neurotoxin 02 (plectoxin) family.</text>
</comment>
<keyword id="KW-0108">Calcium channel impairing toxin</keyword>
<keyword id="KW-0903">Direct protein sequencing</keyword>
<keyword id="KW-1015">Disulfide bond</keyword>
<keyword id="KW-0872">Ion channel impairing toxin</keyword>
<keyword id="KW-0960">Knottin</keyword>
<keyword id="KW-0528">Neurotoxin</keyword>
<keyword id="KW-0964">Secreted</keyword>
<keyword id="KW-0800">Toxin</keyword>
<keyword id="KW-1218">Voltage-gated calcium channel impairing toxin</keyword>